<organism>
    <name type="scientific">Aliivibrio salmonicida (strain LFI1238)</name>
    <name type="common">Vibrio salmonicida (strain LFI1238)</name>
    <dbReference type="NCBI Taxonomy" id="316275"/>
    <lineage>
        <taxon>Bacteria</taxon>
        <taxon>Pseudomonadati</taxon>
        <taxon>Pseudomonadota</taxon>
        <taxon>Gammaproteobacteria</taxon>
        <taxon>Vibrionales</taxon>
        <taxon>Vibrionaceae</taxon>
        <taxon>Aliivibrio</taxon>
    </lineage>
</organism>
<gene>
    <name evidence="1" type="primary">hisG</name>
    <name type="ordered locus">VSAL_I1133</name>
</gene>
<protein>
    <recommendedName>
        <fullName evidence="1">ATP phosphoribosyltransferase</fullName>
        <shortName evidence="1">ATP-PRT</shortName>
        <shortName evidence="1">ATP-PRTase</shortName>
        <ecNumber evidence="1">2.4.2.17</ecNumber>
    </recommendedName>
</protein>
<sequence length="298" mass="32675">MSAQRLRIAIQKKGRLSKECQELFKRCGMKFNISGERLVVHSENMPIDLLLVRDDDIPSLIMDGVVDLGVIGENELEEVRLERKALGEPSAFTTLRRLDFGGCRLSIAIDKDAVYNGPQDLAGKRIATTYSQLLKSFMDEKNIPFSTCILNGSVEVAPRAGLSDAIADLVSTGATLEANGLKEAEVIFRSKATLIQREGEFDADKAALIDKLLTRMQGCIQAKESKYIMLHAPTDKLEAIKSLLPGAEDPTVLPLSSDGAKVAVHLVSTENLFWETMEQLKALGASSILVLPIEKMME</sequence>
<reference key="1">
    <citation type="journal article" date="2008" name="BMC Genomics">
        <title>The genome sequence of the fish pathogen Aliivibrio salmonicida strain LFI1238 shows extensive evidence of gene decay.</title>
        <authorList>
            <person name="Hjerde E."/>
            <person name="Lorentzen M.S."/>
            <person name="Holden M.T."/>
            <person name="Seeger K."/>
            <person name="Paulsen S."/>
            <person name="Bason N."/>
            <person name="Churcher C."/>
            <person name="Harris D."/>
            <person name="Norbertczak H."/>
            <person name="Quail M.A."/>
            <person name="Sanders S."/>
            <person name="Thurston S."/>
            <person name="Parkhill J."/>
            <person name="Willassen N.P."/>
            <person name="Thomson N.R."/>
        </authorList>
    </citation>
    <scope>NUCLEOTIDE SEQUENCE [LARGE SCALE GENOMIC DNA]</scope>
    <source>
        <strain>LFI1238</strain>
    </source>
</reference>
<evidence type="ECO:0000255" key="1">
    <source>
        <dbReference type="HAMAP-Rule" id="MF_00079"/>
    </source>
</evidence>
<comment type="function">
    <text evidence="1">Catalyzes the condensation of ATP and 5-phosphoribose 1-diphosphate to form N'-(5'-phosphoribosyl)-ATP (PR-ATP). Has a crucial role in the pathway because the rate of histidine biosynthesis seems to be controlled primarily by regulation of HisG enzymatic activity.</text>
</comment>
<comment type="catalytic activity">
    <reaction evidence="1">
        <text>1-(5-phospho-beta-D-ribosyl)-ATP + diphosphate = 5-phospho-alpha-D-ribose 1-diphosphate + ATP</text>
        <dbReference type="Rhea" id="RHEA:18473"/>
        <dbReference type="ChEBI" id="CHEBI:30616"/>
        <dbReference type="ChEBI" id="CHEBI:33019"/>
        <dbReference type="ChEBI" id="CHEBI:58017"/>
        <dbReference type="ChEBI" id="CHEBI:73183"/>
        <dbReference type="EC" id="2.4.2.17"/>
    </reaction>
</comment>
<comment type="cofactor">
    <cofactor evidence="1">
        <name>Mg(2+)</name>
        <dbReference type="ChEBI" id="CHEBI:18420"/>
    </cofactor>
</comment>
<comment type="activity regulation">
    <text evidence="1">Feedback inhibited by histidine.</text>
</comment>
<comment type="pathway">
    <text evidence="1">Amino-acid biosynthesis; L-histidine biosynthesis; L-histidine from 5-phospho-alpha-D-ribose 1-diphosphate: step 1/9.</text>
</comment>
<comment type="subcellular location">
    <subcellularLocation>
        <location evidence="1">Cytoplasm</location>
    </subcellularLocation>
</comment>
<comment type="similarity">
    <text evidence="1">Belongs to the ATP phosphoribosyltransferase family. Long subfamily.</text>
</comment>
<name>HIS1_ALISL</name>
<keyword id="KW-0028">Amino-acid biosynthesis</keyword>
<keyword id="KW-0067">ATP-binding</keyword>
<keyword id="KW-0963">Cytoplasm</keyword>
<keyword id="KW-0328">Glycosyltransferase</keyword>
<keyword id="KW-0368">Histidine biosynthesis</keyword>
<keyword id="KW-0460">Magnesium</keyword>
<keyword id="KW-0479">Metal-binding</keyword>
<keyword id="KW-0547">Nucleotide-binding</keyword>
<keyword id="KW-0808">Transferase</keyword>
<feature type="chain" id="PRO_1000092725" description="ATP phosphoribosyltransferase">
    <location>
        <begin position="1"/>
        <end position="298"/>
    </location>
</feature>
<accession>B6EJ87</accession>
<proteinExistence type="inferred from homology"/>
<dbReference type="EC" id="2.4.2.17" evidence="1"/>
<dbReference type="EMBL" id="FM178379">
    <property type="protein sequence ID" value="CAQ78818.1"/>
    <property type="molecule type" value="Genomic_DNA"/>
</dbReference>
<dbReference type="RefSeq" id="WP_012549878.1">
    <property type="nucleotide sequence ID" value="NC_011312.1"/>
</dbReference>
<dbReference type="SMR" id="B6EJ87"/>
<dbReference type="KEGG" id="vsa:VSAL_I1133"/>
<dbReference type="eggNOG" id="COG0040">
    <property type="taxonomic scope" value="Bacteria"/>
</dbReference>
<dbReference type="HOGENOM" id="CLU_038115_1_0_6"/>
<dbReference type="UniPathway" id="UPA00031">
    <property type="reaction ID" value="UER00006"/>
</dbReference>
<dbReference type="Proteomes" id="UP000001730">
    <property type="component" value="Chromosome 1"/>
</dbReference>
<dbReference type="GO" id="GO:0005737">
    <property type="term" value="C:cytoplasm"/>
    <property type="evidence" value="ECO:0007669"/>
    <property type="project" value="UniProtKB-SubCell"/>
</dbReference>
<dbReference type="GO" id="GO:0005524">
    <property type="term" value="F:ATP binding"/>
    <property type="evidence" value="ECO:0007669"/>
    <property type="project" value="UniProtKB-KW"/>
</dbReference>
<dbReference type="GO" id="GO:0003879">
    <property type="term" value="F:ATP phosphoribosyltransferase activity"/>
    <property type="evidence" value="ECO:0007669"/>
    <property type="project" value="UniProtKB-UniRule"/>
</dbReference>
<dbReference type="GO" id="GO:0000287">
    <property type="term" value="F:magnesium ion binding"/>
    <property type="evidence" value="ECO:0007669"/>
    <property type="project" value="UniProtKB-UniRule"/>
</dbReference>
<dbReference type="GO" id="GO:0000105">
    <property type="term" value="P:L-histidine biosynthetic process"/>
    <property type="evidence" value="ECO:0007669"/>
    <property type="project" value="UniProtKB-UniRule"/>
</dbReference>
<dbReference type="FunFam" id="3.30.70.120:FF:000002">
    <property type="entry name" value="ATP phosphoribosyltransferase"/>
    <property type="match status" value="1"/>
</dbReference>
<dbReference type="FunFam" id="3.40.190.10:FF:000008">
    <property type="entry name" value="ATP phosphoribosyltransferase"/>
    <property type="match status" value="1"/>
</dbReference>
<dbReference type="Gene3D" id="3.30.70.120">
    <property type="match status" value="1"/>
</dbReference>
<dbReference type="Gene3D" id="3.40.190.10">
    <property type="entry name" value="Periplasmic binding protein-like II"/>
    <property type="match status" value="2"/>
</dbReference>
<dbReference type="HAMAP" id="MF_00079">
    <property type="entry name" value="HisG_Long"/>
    <property type="match status" value="1"/>
</dbReference>
<dbReference type="InterPro" id="IPR020621">
    <property type="entry name" value="ATP-PRT_HisG_long"/>
</dbReference>
<dbReference type="InterPro" id="IPR013820">
    <property type="entry name" value="ATP_PRibTrfase_cat"/>
</dbReference>
<dbReference type="InterPro" id="IPR018198">
    <property type="entry name" value="ATP_PRibTrfase_CS"/>
</dbReference>
<dbReference type="InterPro" id="IPR001348">
    <property type="entry name" value="ATP_PRibTrfase_HisG"/>
</dbReference>
<dbReference type="InterPro" id="IPR013115">
    <property type="entry name" value="HisG_C"/>
</dbReference>
<dbReference type="InterPro" id="IPR011322">
    <property type="entry name" value="N-reg_PII-like_a/b"/>
</dbReference>
<dbReference type="InterPro" id="IPR015867">
    <property type="entry name" value="N-reg_PII/ATP_PRibTrfase_C"/>
</dbReference>
<dbReference type="NCBIfam" id="TIGR00070">
    <property type="entry name" value="hisG"/>
    <property type="match status" value="1"/>
</dbReference>
<dbReference type="NCBIfam" id="TIGR03455">
    <property type="entry name" value="HisG_C-term"/>
    <property type="match status" value="1"/>
</dbReference>
<dbReference type="PANTHER" id="PTHR21403:SF8">
    <property type="entry name" value="ATP PHOSPHORIBOSYLTRANSFERASE"/>
    <property type="match status" value="1"/>
</dbReference>
<dbReference type="PANTHER" id="PTHR21403">
    <property type="entry name" value="ATP PHOSPHORIBOSYLTRANSFERASE ATP-PRTASE"/>
    <property type="match status" value="1"/>
</dbReference>
<dbReference type="Pfam" id="PF01634">
    <property type="entry name" value="HisG"/>
    <property type="match status" value="1"/>
</dbReference>
<dbReference type="Pfam" id="PF08029">
    <property type="entry name" value="HisG_C"/>
    <property type="match status" value="1"/>
</dbReference>
<dbReference type="SUPFAM" id="SSF54913">
    <property type="entry name" value="GlnB-like"/>
    <property type="match status" value="1"/>
</dbReference>
<dbReference type="SUPFAM" id="SSF53850">
    <property type="entry name" value="Periplasmic binding protein-like II"/>
    <property type="match status" value="1"/>
</dbReference>
<dbReference type="PROSITE" id="PS01316">
    <property type="entry name" value="ATP_P_PHORIBOSYLTR"/>
    <property type="match status" value="1"/>
</dbReference>